<protein>
    <recommendedName>
        <fullName>AN1-type zinc finger protein 6</fullName>
    </recommendedName>
    <alternativeName>
        <fullName>Zinc finger A20 domain-containing protein 3</fullName>
    </alternativeName>
</protein>
<gene>
    <name type="primary">ZFAND6</name>
    <name type="synonym">ZA20D3</name>
</gene>
<organism>
    <name type="scientific">Bos taurus</name>
    <name type="common">Bovine</name>
    <dbReference type="NCBI Taxonomy" id="9913"/>
    <lineage>
        <taxon>Eukaryota</taxon>
        <taxon>Metazoa</taxon>
        <taxon>Chordata</taxon>
        <taxon>Craniata</taxon>
        <taxon>Vertebrata</taxon>
        <taxon>Euteleostomi</taxon>
        <taxon>Mammalia</taxon>
        <taxon>Eutheria</taxon>
        <taxon>Laurasiatheria</taxon>
        <taxon>Artiodactyla</taxon>
        <taxon>Ruminantia</taxon>
        <taxon>Pecora</taxon>
        <taxon>Bovidae</taxon>
        <taxon>Bovinae</taxon>
        <taxon>Bos</taxon>
    </lineage>
</organism>
<dbReference type="EMBL" id="BC102651">
    <property type="protein sequence ID" value="AAI02652.1"/>
    <property type="molecule type" value="mRNA"/>
</dbReference>
<dbReference type="RefSeq" id="NP_001029632.1">
    <property type="nucleotide sequence ID" value="NM_001034460.2"/>
</dbReference>
<dbReference type="RefSeq" id="XP_024837514.1">
    <property type="nucleotide sequence ID" value="XM_024981746.2"/>
</dbReference>
<dbReference type="RefSeq" id="XP_024837515.1">
    <property type="nucleotide sequence ID" value="XM_024981747.2"/>
</dbReference>
<dbReference type="RefSeq" id="XP_059735024.1">
    <property type="nucleotide sequence ID" value="XM_059879041.1"/>
</dbReference>
<dbReference type="SMR" id="Q3SZY7"/>
<dbReference type="FunCoup" id="Q3SZY7">
    <property type="interactions" value="2284"/>
</dbReference>
<dbReference type="STRING" id="9913.ENSBTAP00000056063"/>
<dbReference type="PaxDb" id="9913-ENSBTAP00000016349"/>
<dbReference type="Ensembl" id="ENSBTAT00000066020.3">
    <property type="protein sequence ID" value="ENSBTAP00000056063.2"/>
    <property type="gene ID" value="ENSBTAG00000012321.6"/>
</dbReference>
<dbReference type="GeneID" id="514167"/>
<dbReference type="KEGG" id="bta:514167"/>
<dbReference type="CTD" id="54469"/>
<dbReference type="VEuPathDB" id="HostDB:ENSBTAG00000012321"/>
<dbReference type="VGNC" id="VGNC:107038">
    <property type="gene designation" value="ZFAND6"/>
</dbReference>
<dbReference type="eggNOG" id="KOG3173">
    <property type="taxonomic scope" value="Eukaryota"/>
</dbReference>
<dbReference type="GeneTree" id="ENSGT00940000160833"/>
<dbReference type="HOGENOM" id="CLU_057016_1_1_1"/>
<dbReference type="InParanoid" id="Q3SZY7"/>
<dbReference type="OMA" id="YCAMHRY"/>
<dbReference type="OrthoDB" id="428577at2759"/>
<dbReference type="Reactome" id="R-BTA-9033241">
    <property type="pathway name" value="Peroxisomal protein import"/>
</dbReference>
<dbReference type="Proteomes" id="UP000009136">
    <property type="component" value="Chromosome 21"/>
</dbReference>
<dbReference type="Bgee" id="ENSBTAG00000012321">
    <property type="expression patterns" value="Expressed in spermatid and 103 other cell types or tissues"/>
</dbReference>
<dbReference type="GO" id="GO:0003677">
    <property type="term" value="F:DNA binding"/>
    <property type="evidence" value="ECO:0007669"/>
    <property type="project" value="InterPro"/>
</dbReference>
<dbReference type="GO" id="GO:0031593">
    <property type="term" value="F:polyubiquitin modification-dependent protein binding"/>
    <property type="evidence" value="ECO:0000318"/>
    <property type="project" value="GO_Central"/>
</dbReference>
<dbReference type="GO" id="GO:0008270">
    <property type="term" value="F:zinc ion binding"/>
    <property type="evidence" value="ECO:0007669"/>
    <property type="project" value="UniProtKB-KW"/>
</dbReference>
<dbReference type="GO" id="GO:0006625">
    <property type="term" value="P:protein targeting to peroxisome"/>
    <property type="evidence" value="ECO:0000318"/>
    <property type="project" value="GO_Central"/>
</dbReference>
<dbReference type="FunFam" id="1.20.5.4770:FF:000001">
    <property type="entry name" value="Zinc finger AN1-type containing 6"/>
    <property type="match status" value="1"/>
</dbReference>
<dbReference type="FunFam" id="4.10.1110.10:FF:000001">
    <property type="entry name" value="Zinc finger AN1-type containing 6"/>
    <property type="match status" value="1"/>
</dbReference>
<dbReference type="Gene3D" id="1.20.5.4770">
    <property type="match status" value="1"/>
</dbReference>
<dbReference type="Gene3D" id="4.10.1110.10">
    <property type="entry name" value="AN1-like Zinc finger"/>
    <property type="match status" value="1"/>
</dbReference>
<dbReference type="InterPro" id="IPR035896">
    <property type="entry name" value="AN1-like_Znf"/>
</dbReference>
<dbReference type="InterPro" id="IPR050652">
    <property type="entry name" value="AN1_A20_ZnFinger"/>
</dbReference>
<dbReference type="InterPro" id="IPR002653">
    <property type="entry name" value="Znf_A20"/>
</dbReference>
<dbReference type="InterPro" id="IPR000058">
    <property type="entry name" value="Znf_AN1"/>
</dbReference>
<dbReference type="PANTHER" id="PTHR10634">
    <property type="entry name" value="AN1-TYPE ZINC FINGER PROTEIN"/>
    <property type="match status" value="1"/>
</dbReference>
<dbReference type="PANTHER" id="PTHR10634:SF25">
    <property type="entry name" value="AN1-TYPE ZINC FINGER PROTEIN 6"/>
    <property type="match status" value="1"/>
</dbReference>
<dbReference type="Pfam" id="PF01754">
    <property type="entry name" value="zf-A20"/>
    <property type="match status" value="1"/>
</dbReference>
<dbReference type="Pfam" id="PF01428">
    <property type="entry name" value="zf-AN1"/>
    <property type="match status" value="1"/>
</dbReference>
<dbReference type="SMART" id="SM00259">
    <property type="entry name" value="ZnF_A20"/>
    <property type="match status" value="1"/>
</dbReference>
<dbReference type="SMART" id="SM00154">
    <property type="entry name" value="ZnF_AN1"/>
    <property type="match status" value="1"/>
</dbReference>
<dbReference type="SUPFAM" id="SSF118310">
    <property type="entry name" value="AN1-like Zinc finger"/>
    <property type="match status" value="1"/>
</dbReference>
<dbReference type="SUPFAM" id="SSF57716">
    <property type="entry name" value="Glucocorticoid receptor-like (DNA-binding domain)"/>
    <property type="match status" value="1"/>
</dbReference>
<dbReference type="PROSITE" id="PS51036">
    <property type="entry name" value="ZF_A20"/>
    <property type="match status" value="1"/>
</dbReference>
<dbReference type="PROSITE" id="PS51039">
    <property type="entry name" value="ZF_AN1"/>
    <property type="match status" value="1"/>
</dbReference>
<name>ZFAN6_BOVIN</name>
<proteinExistence type="evidence at transcript level"/>
<reference key="1">
    <citation type="submission" date="2005-08" db="EMBL/GenBank/DDBJ databases">
        <authorList>
            <consortium name="NIH - Mammalian Gene Collection (MGC) project"/>
        </authorList>
    </citation>
    <scope>NUCLEOTIDE SEQUENCE [LARGE SCALE MRNA]</scope>
    <source>
        <strain>Crossbred X Angus</strain>
        <tissue>Liver</tissue>
    </source>
</reference>
<keyword id="KW-0007">Acetylation</keyword>
<keyword id="KW-0479">Metal-binding</keyword>
<keyword id="KW-0597">Phosphoprotein</keyword>
<keyword id="KW-1185">Reference proteome</keyword>
<keyword id="KW-0862">Zinc</keyword>
<keyword id="KW-0863">Zinc-finger</keyword>
<feature type="chain" id="PRO_0000245234" description="AN1-type zinc finger protein 6">
    <location>
        <begin position="1"/>
        <end position="208"/>
    </location>
</feature>
<feature type="zinc finger region" description="A20-type" evidence="5">
    <location>
        <begin position="8"/>
        <end position="42"/>
    </location>
</feature>
<feature type="zinc finger region" description="AN1-type" evidence="4">
    <location>
        <begin position="143"/>
        <end position="189"/>
    </location>
</feature>
<feature type="region of interest" description="Disordered" evidence="6">
    <location>
        <begin position="41"/>
        <end position="110"/>
    </location>
</feature>
<feature type="compositionally biased region" description="Polar residues" evidence="6">
    <location>
        <begin position="54"/>
        <end position="68"/>
    </location>
</feature>
<feature type="compositionally biased region" description="Low complexity" evidence="6">
    <location>
        <begin position="83"/>
        <end position="94"/>
    </location>
</feature>
<feature type="compositionally biased region" description="Polar residues" evidence="6">
    <location>
        <begin position="95"/>
        <end position="110"/>
    </location>
</feature>
<feature type="binding site" evidence="5">
    <location>
        <position position="14"/>
    </location>
    <ligand>
        <name>Zn(2+)</name>
        <dbReference type="ChEBI" id="CHEBI:29105"/>
        <label>1</label>
    </ligand>
</feature>
<feature type="binding site" evidence="5">
    <location>
        <position position="18"/>
    </location>
    <ligand>
        <name>Zn(2+)</name>
        <dbReference type="ChEBI" id="CHEBI:29105"/>
        <label>1</label>
    </ligand>
</feature>
<feature type="binding site" evidence="5">
    <location>
        <position position="30"/>
    </location>
    <ligand>
        <name>Zn(2+)</name>
        <dbReference type="ChEBI" id="CHEBI:29105"/>
        <label>1</label>
    </ligand>
</feature>
<feature type="binding site" evidence="5">
    <location>
        <position position="33"/>
    </location>
    <ligand>
        <name>Zn(2+)</name>
        <dbReference type="ChEBI" id="CHEBI:29105"/>
        <label>1</label>
    </ligand>
</feature>
<feature type="binding site" evidence="4">
    <location>
        <position position="149"/>
    </location>
    <ligand>
        <name>Zn(2+)</name>
        <dbReference type="ChEBI" id="CHEBI:29105"/>
        <label>2</label>
    </ligand>
</feature>
<feature type="binding site" evidence="4">
    <location>
        <position position="152"/>
    </location>
    <ligand>
        <name>Zn(2+)</name>
        <dbReference type="ChEBI" id="CHEBI:29105"/>
        <label>2</label>
    </ligand>
</feature>
<feature type="binding site" evidence="4">
    <location>
        <position position="163"/>
    </location>
    <ligand>
        <name>Zn(2+)</name>
        <dbReference type="ChEBI" id="CHEBI:29105"/>
        <label>3</label>
    </ligand>
</feature>
<feature type="binding site" evidence="4">
    <location>
        <position position="165"/>
    </location>
    <ligand>
        <name>Zn(2+)</name>
        <dbReference type="ChEBI" id="CHEBI:29105"/>
        <label>3</label>
    </ligand>
</feature>
<feature type="binding site" evidence="4">
    <location>
        <position position="170"/>
    </location>
    <ligand>
        <name>Zn(2+)</name>
        <dbReference type="ChEBI" id="CHEBI:29105"/>
        <label>2</label>
    </ligand>
</feature>
<feature type="binding site" evidence="4">
    <location>
        <position position="173"/>
    </location>
    <ligand>
        <name>Zn(2+)</name>
        <dbReference type="ChEBI" id="CHEBI:29105"/>
        <label>2</label>
    </ligand>
</feature>
<feature type="binding site" evidence="4">
    <location>
        <position position="179"/>
    </location>
    <ligand>
        <name>Zn(2+)</name>
        <dbReference type="ChEBI" id="CHEBI:29105"/>
        <label>3</label>
    </ligand>
</feature>
<feature type="binding site" evidence="4">
    <location>
        <position position="181"/>
    </location>
    <ligand>
        <name>Zn(2+)</name>
        <dbReference type="ChEBI" id="CHEBI:29105"/>
        <label>3</label>
    </ligand>
</feature>
<feature type="modified residue" description="Phosphoserine" evidence="2">
    <location>
        <position position="49"/>
    </location>
</feature>
<feature type="modified residue" description="N6-acetyllysine" evidence="3">
    <location>
        <position position="204"/>
    </location>
</feature>
<comment type="subunit">
    <text evidence="1">Interacts with PKN1.</text>
</comment>
<sequence length="208" mass="22519">MAQETNHSQVPMLCSTGCGFYGNPRTNGMCSVCYKEHLQRQNSSNGRISPPAPSVTSLSESLPVQCTDGSVPEAQSALDSTASSVQPSPVSNQSLLSESVASSQVDSTSVDKAIPETEDLQASVSETAQQASEEQSKSLEKPKQKKNRCFMCRKKVGLTGFECRCGNVYCGVHRYSDVHNCSYNYKADAAEKIRKENPVVVGEKIQKI</sequence>
<accession>Q3SZY7</accession>
<evidence type="ECO:0000250" key="1"/>
<evidence type="ECO:0000250" key="2">
    <source>
        <dbReference type="UniProtKB" id="Q6FIF0"/>
    </source>
</evidence>
<evidence type="ECO:0000250" key="3">
    <source>
        <dbReference type="UniProtKB" id="Q9DCH6"/>
    </source>
</evidence>
<evidence type="ECO:0000255" key="4">
    <source>
        <dbReference type="PROSITE-ProRule" id="PRU00449"/>
    </source>
</evidence>
<evidence type="ECO:0000255" key="5">
    <source>
        <dbReference type="PROSITE-ProRule" id="PRU00451"/>
    </source>
</evidence>
<evidence type="ECO:0000256" key="6">
    <source>
        <dbReference type="SAM" id="MobiDB-lite"/>
    </source>
</evidence>